<dbReference type="EC" id="2.3.1.89" evidence="1"/>
<dbReference type="EMBL" id="CP000411">
    <property type="protein sequence ID" value="ABJ56699.1"/>
    <property type="molecule type" value="Genomic_DNA"/>
</dbReference>
<dbReference type="SMR" id="Q04FS3"/>
<dbReference type="STRING" id="203123.OEOE_0772"/>
<dbReference type="KEGG" id="ooe:OEOE_0772"/>
<dbReference type="eggNOG" id="COG2171">
    <property type="taxonomic scope" value="Bacteria"/>
</dbReference>
<dbReference type="HOGENOM" id="CLU_103751_0_0_9"/>
<dbReference type="UniPathway" id="UPA00034">
    <property type="reaction ID" value="UER00022"/>
</dbReference>
<dbReference type="Proteomes" id="UP000000774">
    <property type="component" value="Chromosome"/>
</dbReference>
<dbReference type="GO" id="GO:0047200">
    <property type="term" value="F:tetrahydrodipicolinate N-acetyltransferase activity"/>
    <property type="evidence" value="ECO:0007669"/>
    <property type="project" value="UniProtKB-EC"/>
</dbReference>
<dbReference type="GO" id="GO:0019877">
    <property type="term" value="P:diaminopimelate biosynthetic process"/>
    <property type="evidence" value="ECO:0007669"/>
    <property type="project" value="UniProtKB-UniRule"/>
</dbReference>
<dbReference type="GO" id="GO:0009089">
    <property type="term" value="P:lysine biosynthetic process via diaminopimelate"/>
    <property type="evidence" value="ECO:0007669"/>
    <property type="project" value="UniProtKB-UniRule"/>
</dbReference>
<dbReference type="Gene3D" id="2.160.10.10">
    <property type="entry name" value="Hexapeptide repeat proteins"/>
    <property type="match status" value="1"/>
</dbReference>
<dbReference type="Gene3D" id="3.30.70.250">
    <property type="entry name" value="Malonyl-CoA ACP transacylase, ACP-binding"/>
    <property type="match status" value="1"/>
</dbReference>
<dbReference type="HAMAP" id="MF_01691">
    <property type="entry name" value="DapH"/>
    <property type="match status" value="1"/>
</dbReference>
<dbReference type="InterPro" id="IPR019873">
    <property type="entry name" value="DapH"/>
</dbReference>
<dbReference type="InterPro" id="IPR013710">
    <property type="entry name" value="DapH_N"/>
</dbReference>
<dbReference type="InterPro" id="IPR001451">
    <property type="entry name" value="Hexapep"/>
</dbReference>
<dbReference type="InterPro" id="IPR018357">
    <property type="entry name" value="Hexapep_transf_CS"/>
</dbReference>
<dbReference type="InterPro" id="IPR050179">
    <property type="entry name" value="Trans_hexapeptide_repeat"/>
</dbReference>
<dbReference type="InterPro" id="IPR011004">
    <property type="entry name" value="Trimer_LpxA-like_sf"/>
</dbReference>
<dbReference type="NCBIfam" id="TIGR03532">
    <property type="entry name" value="DapD_Ac"/>
    <property type="match status" value="1"/>
</dbReference>
<dbReference type="PANTHER" id="PTHR43300:SF10">
    <property type="entry name" value="2,3,4,5-TETRAHYDROPYRIDINE-2,6-DICARBOXYLATE N-ACETYLTRANSFERASE"/>
    <property type="match status" value="1"/>
</dbReference>
<dbReference type="PANTHER" id="PTHR43300">
    <property type="entry name" value="ACETYLTRANSFERASE"/>
    <property type="match status" value="1"/>
</dbReference>
<dbReference type="Pfam" id="PF08503">
    <property type="entry name" value="DapH_N"/>
    <property type="match status" value="1"/>
</dbReference>
<dbReference type="Pfam" id="PF00132">
    <property type="entry name" value="Hexapep"/>
    <property type="match status" value="1"/>
</dbReference>
<dbReference type="Pfam" id="PF14602">
    <property type="entry name" value="Hexapep_2"/>
    <property type="match status" value="1"/>
</dbReference>
<dbReference type="SUPFAM" id="SSF51161">
    <property type="entry name" value="Trimeric LpxA-like enzymes"/>
    <property type="match status" value="1"/>
</dbReference>
<dbReference type="PROSITE" id="PS00101">
    <property type="entry name" value="HEXAPEP_TRANSFERASES"/>
    <property type="match status" value="2"/>
</dbReference>
<proteinExistence type="inferred from homology"/>
<comment type="function">
    <text evidence="1">Catalyzes the transfer of an acetyl group from acetyl-CoA to tetrahydrodipicolinate.</text>
</comment>
<comment type="catalytic activity">
    <reaction evidence="1">
        <text>(S)-2,3,4,5-tetrahydrodipicolinate + acetyl-CoA + H2O = L-2-acetamido-6-oxoheptanedioate + CoA</text>
        <dbReference type="Rhea" id="RHEA:13085"/>
        <dbReference type="ChEBI" id="CHEBI:15377"/>
        <dbReference type="ChEBI" id="CHEBI:16845"/>
        <dbReference type="ChEBI" id="CHEBI:57287"/>
        <dbReference type="ChEBI" id="CHEBI:57288"/>
        <dbReference type="ChEBI" id="CHEBI:58117"/>
        <dbReference type="EC" id="2.3.1.89"/>
    </reaction>
</comment>
<comment type="pathway">
    <text evidence="1">Amino-acid biosynthesis; L-lysine biosynthesis via DAP pathway; LL-2,6-diaminopimelate from (S)-tetrahydrodipicolinate (acetylase route): step 1/3.</text>
</comment>
<comment type="similarity">
    <text evidence="1">Belongs to the transferase hexapeptide repeat family. DapH subfamily.</text>
</comment>
<organism>
    <name type="scientific">Oenococcus oeni (strain ATCC BAA-331 / PSU-1)</name>
    <dbReference type="NCBI Taxonomy" id="203123"/>
    <lineage>
        <taxon>Bacteria</taxon>
        <taxon>Bacillati</taxon>
        <taxon>Bacillota</taxon>
        <taxon>Bacilli</taxon>
        <taxon>Lactobacillales</taxon>
        <taxon>Lactobacillaceae</taxon>
        <taxon>Oenococcus</taxon>
    </lineage>
</organism>
<name>DAPH_OENOB</name>
<keyword id="KW-0012">Acyltransferase</keyword>
<keyword id="KW-0028">Amino-acid biosynthesis</keyword>
<keyword id="KW-0220">Diaminopimelate biosynthesis</keyword>
<keyword id="KW-0457">Lysine biosynthesis</keyword>
<keyword id="KW-1185">Reference proteome</keyword>
<keyword id="KW-0677">Repeat</keyword>
<keyword id="KW-0808">Transferase</keyword>
<feature type="chain" id="PRO_0000376683" description="2,3,4,5-tetrahydropyridine-2,6-dicarboxylate N-acetyltransferase">
    <location>
        <begin position="1"/>
        <end position="233"/>
    </location>
</feature>
<evidence type="ECO:0000255" key="1">
    <source>
        <dbReference type="HAMAP-Rule" id="MF_01691"/>
    </source>
</evidence>
<accession>Q04FS3</accession>
<sequence>MTELDAQKIIDFIANSKKQTAVKVTYKGHLNGRIPTSIQNFSNSDFGILYGDWSDIKPLLSGLNKKDYLIENNARNSAVPLLNIKDINARIEPGAIIRDQVKIADNAVIMMGAVINIGAEIGEATMIDMGAVLGGRAIVGKHSHIGAGAVLAGVVEPASAQPVRVGDNVLIGANAVIIEGVQIGDGAVVGAGAVVINDVPAHTVVAGVPAKVIKQIDEKTENKTALIDALRSL</sequence>
<gene>
    <name evidence="1" type="primary">dapH</name>
    <name type="ordered locus">OEOE_0772</name>
</gene>
<protein>
    <recommendedName>
        <fullName evidence="1">2,3,4,5-tetrahydropyridine-2,6-dicarboxylate N-acetyltransferase</fullName>
        <ecNumber evidence="1">2.3.1.89</ecNumber>
    </recommendedName>
    <alternativeName>
        <fullName evidence="1">Tetrahydrodipicolinate N-acetyltransferase</fullName>
        <shortName evidence="1">THP acetyltransferase</shortName>
        <shortName evidence="1">Tetrahydropicolinate acetylase</shortName>
    </alternativeName>
</protein>
<reference key="1">
    <citation type="journal article" date="2006" name="Proc. Natl. Acad. Sci. U.S.A.">
        <title>Comparative genomics of the lactic acid bacteria.</title>
        <authorList>
            <person name="Makarova K.S."/>
            <person name="Slesarev A."/>
            <person name="Wolf Y.I."/>
            <person name="Sorokin A."/>
            <person name="Mirkin B."/>
            <person name="Koonin E.V."/>
            <person name="Pavlov A."/>
            <person name="Pavlova N."/>
            <person name="Karamychev V."/>
            <person name="Polouchine N."/>
            <person name="Shakhova V."/>
            <person name="Grigoriev I."/>
            <person name="Lou Y."/>
            <person name="Rohksar D."/>
            <person name="Lucas S."/>
            <person name="Huang K."/>
            <person name="Goodstein D.M."/>
            <person name="Hawkins T."/>
            <person name="Plengvidhya V."/>
            <person name="Welker D."/>
            <person name="Hughes J."/>
            <person name="Goh Y."/>
            <person name="Benson A."/>
            <person name="Baldwin K."/>
            <person name="Lee J.-H."/>
            <person name="Diaz-Muniz I."/>
            <person name="Dosti B."/>
            <person name="Smeianov V."/>
            <person name="Wechter W."/>
            <person name="Barabote R."/>
            <person name="Lorca G."/>
            <person name="Altermann E."/>
            <person name="Barrangou R."/>
            <person name="Ganesan B."/>
            <person name="Xie Y."/>
            <person name="Rawsthorne H."/>
            <person name="Tamir D."/>
            <person name="Parker C."/>
            <person name="Breidt F."/>
            <person name="Broadbent J.R."/>
            <person name="Hutkins R."/>
            <person name="O'Sullivan D."/>
            <person name="Steele J."/>
            <person name="Unlu G."/>
            <person name="Saier M.H. Jr."/>
            <person name="Klaenhammer T."/>
            <person name="Richardson P."/>
            <person name="Kozyavkin S."/>
            <person name="Weimer B.C."/>
            <person name="Mills D.A."/>
        </authorList>
    </citation>
    <scope>NUCLEOTIDE SEQUENCE [LARGE SCALE GENOMIC DNA]</scope>
    <source>
        <strain>ATCC BAA-331 / PSU-1</strain>
    </source>
</reference>